<name>F120B_HUMAN</name>
<reference key="1">
    <citation type="journal article" date="2007" name="Mol. Endocrinol.">
        <title>Constitutive coactivator of peroxisome proliferator-activated receptor (PPARgamma), a novel coactivator of PPARgamma that promotes adipogenesis.</title>
        <authorList>
            <person name="Li D."/>
            <person name="Kang Q."/>
            <person name="Wang D.-M."/>
        </authorList>
    </citation>
    <scope>NUCLEOTIDE SEQUENCE [MRNA] (ISOFORM 1)</scope>
</reference>
<reference key="2">
    <citation type="journal article" date="2001" name="DNA Res.">
        <title>Prediction of the coding sequences of unidentified human genes. XX. The complete sequences of 100 new cDNA clones from brain which code for large proteins in vitro.</title>
        <authorList>
            <person name="Nagase T."/>
            <person name="Nakayama M."/>
            <person name="Nakajima D."/>
            <person name="Kikuno R."/>
            <person name="Ohara O."/>
        </authorList>
    </citation>
    <scope>NUCLEOTIDE SEQUENCE [LARGE SCALE MRNA] (ISOFORM 1)</scope>
    <source>
        <tissue>Brain</tissue>
    </source>
</reference>
<reference key="3">
    <citation type="journal article" date="2004" name="Nat. Genet.">
        <title>Complete sequencing and characterization of 21,243 full-length human cDNAs.</title>
        <authorList>
            <person name="Ota T."/>
            <person name="Suzuki Y."/>
            <person name="Nishikawa T."/>
            <person name="Otsuki T."/>
            <person name="Sugiyama T."/>
            <person name="Irie R."/>
            <person name="Wakamatsu A."/>
            <person name="Hayashi K."/>
            <person name="Sato H."/>
            <person name="Nagai K."/>
            <person name="Kimura K."/>
            <person name="Makita H."/>
            <person name="Sekine M."/>
            <person name="Obayashi M."/>
            <person name="Nishi T."/>
            <person name="Shibahara T."/>
            <person name="Tanaka T."/>
            <person name="Ishii S."/>
            <person name="Yamamoto J."/>
            <person name="Saito K."/>
            <person name="Kawai Y."/>
            <person name="Isono Y."/>
            <person name="Nakamura Y."/>
            <person name="Nagahari K."/>
            <person name="Murakami K."/>
            <person name="Yasuda T."/>
            <person name="Iwayanagi T."/>
            <person name="Wagatsuma M."/>
            <person name="Shiratori A."/>
            <person name="Sudo H."/>
            <person name="Hosoiri T."/>
            <person name="Kaku Y."/>
            <person name="Kodaira H."/>
            <person name="Kondo H."/>
            <person name="Sugawara M."/>
            <person name="Takahashi M."/>
            <person name="Kanda K."/>
            <person name="Yokoi T."/>
            <person name="Furuya T."/>
            <person name="Kikkawa E."/>
            <person name="Omura Y."/>
            <person name="Abe K."/>
            <person name="Kamihara K."/>
            <person name="Katsuta N."/>
            <person name="Sato K."/>
            <person name="Tanikawa M."/>
            <person name="Yamazaki M."/>
            <person name="Ninomiya K."/>
            <person name="Ishibashi T."/>
            <person name="Yamashita H."/>
            <person name="Murakawa K."/>
            <person name="Fujimori K."/>
            <person name="Tanai H."/>
            <person name="Kimata M."/>
            <person name="Watanabe M."/>
            <person name="Hiraoka S."/>
            <person name="Chiba Y."/>
            <person name="Ishida S."/>
            <person name="Ono Y."/>
            <person name="Takiguchi S."/>
            <person name="Watanabe S."/>
            <person name="Yosida M."/>
            <person name="Hotuta T."/>
            <person name="Kusano J."/>
            <person name="Kanehori K."/>
            <person name="Takahashi-Fujii A."/>
            <person name="Hara H."/>
            <person name="Tanase T.-O."/>
            <person name="Nomura Y."/>
            <person name="Togiya S."/>
            <person name="Komai F."/>
            <person name="Hara R."/>
            <person name="Takeuchi K."/>
            <person name="Arita M."/>
            <person name="Imose N."/>
            <person name="Musashino K."/>
            <person name="Yuuki H."/>
            <person name="Oshima A."/>
            <person name="Sasaki N."/>
            <person name="Aotsuka S."/>
            <person name="Yoshikawa Y."/>
            <person name="Matsunawa H."/>
            <person name="Ichihara T."/>
            <person name="Shiohata N."/>
            <person name="Sano S."/>
            <person name="Moriya S."/>
            <person name="Momiyama H."/>
            <person name="Satoh N."/>
            <person name="Takami S."/>
            <person name="Terashima Y."/>
            <person name="Suzuki O."/>
            <person name="Nakagawa S."/>
            <person name="Senoh A."/>
            <person name="Mizoguchi H."/>
            <person name="Goto Y."/>
            <person name="Shimizu F."/>
            <person name="Wakebe H."/>
            <person name="Hishigaki H."/>
            <person name="Watanabe T."/>
            <person name="Sugiyama A."/>
            <person name="Takemoto M."/>
            <person name="Kawakami B."/>
            <person name="Yamazaki M."/>
            <person name="Watanabe K."/>
            <person name="Kumagai A."/>
            <person name="Itakura S."/>
            <person name="Fukuzumi Y."/>
            <person name="Fujimori Y."/>
            <person name="Komiyama M."/>
            <person name="Tashiro H."/>
            <person name="Tanigami A."/>
            <person name="Fujiwara T."/>
            <person name="Ono T."/>
            <person name="Yamada K."/>
            <person name="Fujii Y."/>
            <person name="Ozaki K."/>
            <person name="Hirao M."/>
            <person name="Ohmori Y."/>
            <person name="Kawabata A."/>
            <person name="Hikiji T."/>
            <person name="Kobatake N."/>
            <person name="Inagaki H."/>
            <person name="Ikema Y."/>
            <person name="Okamoto S."/>
            <person name="Okitani R."/>
            <person name="Kawakami T."/>
            <person name="Noguchi S."/>
            <person name="Itoh T."/>
            <person name="Shigeta K."/>
            <person name="Senba T."/>
            <person name="Matsumura K."/>
            <person name="Nakajima Y."/>
            <person name="Mizuno T."/>
            <person name="Morinaga M."/>
            <person name="Sasaki M."/>
            <person name="Togashi T."/>
            <person name="Oyama M."/>
            <person name="Hata H."/>
            <person name="Watanabe M."/>
            <person name="Komatsu T."/>
            <person name="Mizushima-Sugano J."/>
            <person name="Satoh T."/>
            <person name="Shirai Y."/>
            <person name="Takahashi Y."/>
            <person name="Nakagawa K."/>
            <person name="Okumura K."/>
            <person name="Nagase T."/>
            <person name="Nomura N."/>
            <person name="Kikuchi H."/>
            <person name="Masuho Y."/>
            <person name="Yamashita R."/>
            <person name="Nakai K."/>
            <person name="Yada T."/>
            <person name="Nakamura Y."/>
            <person name="Ohara O."/>
            <person name="Isogai T."/>
            <person name="Sugano S."/>
        </authorList>
    </citation>
    <scope>NUCLEOTIDE SEQUENCE [LARGE SCALE MRNA] (ISOFORM 3)</scope>
    <source>
        <tissue>Tongue</tissue>
    </source>
</reference>
<reference key="4">
    <citation type="journal article" date="2003" name="Nature">
        <title>The DNA sequence and analysis of human chromosome 6.</title>
        <authorList>
            <person name="Mungall A.J."/>
            <person name="Palmer S.A."/>
            <person name="Sims S.K."/>
            <person name="Edwards C.A."/>
            <person name="Ashurst J.L."/>
            <person name="Wilming L."/>
            <person name="Jones M.C."/>
            <person name="Horton R."/>
            <person name="Hunt S.E."/>
            <person name="Scott C.E."/>
            <person name="Gilbert J.G.R."/>
            <person name="Clamp M.E."/>
            <person name="Bethel G."/>
            <person name="Milne S."/>
            <person name="Ainscough R."/>
            <person name="Almeida J.P."/>
            <person name="Ambrose K.D."/>
            <person name="Andrews T.D."/>
            <person name="Ashwell R.I.S."/>
            <person name="Babbage A.K."/>
            <person name="Bagguley C.L."/>
            <person name="Bailey J."/>
            <person name="Banerjee R."/>
            <person name="Barker D.J."/>
            <person name="Barlow K.F."/>
            <person name="Bates K."/>
            <person name="Beare D.M."/>
            <person name="Beasley H."/>
            <person name="Beasley O."/>
            <person name="Bird C.P."/>
            <person name="Blakey S.E."/>
            <person name="Bray-Allen S."/>
            <person name="Brook J."/>
            <person name="Brown A.J."/>
            <person name="Brown J.Y."/>
            <person name="Burford D.C."/>
            <person name="Burrill W."/>
            <person name="Burton J."/>
            <person name="Carder C."/>
            <person name="Carter N.P."/>
            <person name="Chapman J.C."/>
            <person name="Clark S.Y."/>
            <person name="Clark G."/>
            <person name="Clee C.M."/>
            <person name="Clegg S."/>
            <person name="Cobley V."/>
            <person name="Collier R.E."/>
            <person name="Collins J.E."/>
            <person name="Colman L.K."/>
            <person name="Corby N.R."/>
            <person name="Coville G.J."/>
            <person name="Culley K.M."/>
            <person name="Dhami P."/>
            <person name="Davies J."/>
            <person name="Dunn M."/>
            <person name="Earthrowl M.E."/>
            <person name="Ellington A.E."/>
            <person name="Evans K.A."/>
            <person name="Faulkner L."/>
            <person name="Francis M.D."/>
            <person name="Frankish A."/>
            <person name="Frankland J."/>
            <person name="French L."/>
            <person name="Garner P."/>
            <person name="Garnett J."/>
            <person name="Ghori M.J."/>
            <person name="Gilby L.M."/>
            <person name="Gillson C.J."/>
            <person name="Glithero R.J."/>
            <person name="Grafham D.V."/>
            <person name="Grant M."/>
            <person name="Gribble S."/>
            <person name="Griffiths C."/>
            <person name="Griffiths M.N.D."/>
            <person name="Hall R."/>
            <person name="Halls K.S."/>
            <person name="Hammond S."/>
            <person name="Harley J.L."/>
            <person name="Hart E.A."/>
            <person name="Heath P.D."/>
            <person name="Heathcott R."/>
            <person name="Holmes S.J."/>
            <person name="Howden P.J."/>
            <person name="Howe K.L."/>
            <person name="Howell G.R."/>
            <person name="Huckle E."/>
            <person name="Humphray S.J."/>
            <person name="Humphries M.D."/>
            <person name="Hunt A.R."/>
            <person name="Johnson C.M."/>
            <person name="Joy A.A."/>
            <person name="Kay M."/>
            <person name="Keenan S.J."/>
            <person name="Kimberley A.M."/>
            <person name="King A."/>
            <person name="Laird G.K."/>
            <person name="Langford C."/>
            <person name="Lawlor S."/>
            <person name="Leongamornlert D.A."/>
            <person name="Leversha M."/>
            <person name="Lloyd C.R."/>
            <person name="Lloyd D.M."/>
            <person name="Loveland J.E."/>
            <person name="Lovell J."/>
            <person name="Martin S."/>
            <person name="Mashreghi-Mohammadi M."/>
            <person name="Maslen G.L."/>
            <person name="Matthews L."/>
            <person name="McCann O.T."/>
            <person name="McLaren S.J."/>
            <person name="McLay K."/>
            <person name="McMurray A."/>
            <person name="Moore M.J.F."/>
            <person name="Mullikin J.C."/>
            <person name="Niblett D."/>
            <person name="Nickerson T."/>
            <person name="Novik K.L."/>
            <person name="Oliver K."/>
            <person name="Overton-Larty E.K."/>
            <person name="Parker A."/>
            <person name="Patel R."/>
            <person name="Pearce A.V."/>
            <person name="Peck A.I."/>
            <person name="Phillimore B.J.C.T."/>
            <person name="Phillips S."/>
            <person name="Plumb R.W."/>
            <person name="Porter K.M."/>
            <person name="Ramsey Y."/>
            <person name="Ranby S.A."/>
            <person name="Rice C.M."/>
            <person name="Ross M.T."/>
            <person name="Searle S.M."/>
            <person name="Sehra H.K."/>
            <person name="Sheridan E."/>
            <person name="Skuce C.D."/>
            <person name="Smith S."/>
            <person name="Smith M."/>
            <person name="Spraggon L."/>
            <person name="Squares S.L."/>
            <person name="Steward C.A."/>
            <person name="Sycamore N."/>
            <person name="Tamlyn-Hall G."/>
            <person name="Tester J."/>
            <person name="Theaker A.J."/>
            <person name="Thomas D.W."/>
            <person name="Thorpe A."/>
            <person name="Tracey A."/>
            <person name="Tromans A."/>
            <person name="Tubby B."/>
            <person name="Wall M."/>
            <person name="Wallis J.M."/>
            <person name="West A.P."/>
            <person name="White S.S."/>
            <person name="Whitehead S.L."/>
            <person name="Whittaker H."/>
            <person name="Wild A."/>
            <person name="Willey D.J."/>
            <person name="Wilmer T.E."/>
            <person name="Wood J.M."/>
            <person name="Wray P.W."/>
            <person name="Wyatt J.C."/>
            <person name="Young L."/>
            <person name="Younger R.M."/>
            <person name="Bentley D.R."/>
            <person name="Coulson A."/>
            <person name="Durbin R.M."/>
            <person name="Hubbard T."/>
            <person name="Sulston J.E."/>
            <person name="Dunham I."/>
            <person name="Rogers J."/>
            <person name="Beck S."/>
        </authorList>
    </citation>
    <scope>NUCLEOTIDE SEQUENCE [LARGE SCALE GENOMIC DNA]</scope>
</reference>
<reference key="5">
    <citation type="submission" date="2005-09" db="EMBL/GenBank/DDBJ databases">
        <authorList>
            <person name="Mural R.J."/>
            <person name="Istrail S."/>
            <person name="Sutton G.G."/>
            <person name="Florea L."/>
            <person name="Halpern A.L."/>
            <person name="Mobarry C.M."/>
            <person name="Lippert R."/>
            <person name="Walenz B."/>
            <person name="Shatkay H."/>
            <person name="Dew I."/>
            <person name="Miller J.R."/>
            <person name="Flanigan M.J."/>
            <person name="Edwards N.J."/>
            <person name="Bolanos R."/>
            <person name="Fasulo D."/>
            <person name="Halldorsson B.V."/>
            <person name="Hannenhalli S."/>
            <person name="Turner R."/>
            <person name="Yooseph S."/>
            <person name="Lu F."/>
            <person name="Nusskern D.R."/>
            <person name="Shue B.C."/>
            <person name="Zheng X.H."/>
            <person name="Zhong F."/>
            <person name="Delcher A.L."/>
            <person name="Huson D.H."/>
            <person name="Kravitz S.A."/>
            <person name="Mouchard L."/>
            <person name="Reinert K."/>
            <person name="Remington K.A."/>
            <person name="Clark A.G."/>
            <person name="Waterman M.S."/>
            <person name="Eichler E.E."/>
            <person name="Adams M.D."/>
            <person name="Hunkapiller M.W."/>
            <person name="Myers E.W."/>
            <person name="Venter J.C."/>
        </authorList>
    </citation>
    <scope>NUCLEOTIDE SEQUENCE [LARGE SCALE GENOMIC DNA]</scope>
</reference>
<reference key="6">
    <citation type="journal article" date="2004" name="Genome Res.">
        <title>The status, quality, and expansion of the NIH full-length cDNA project: the Mammalian Gene Collection (MGC).</title>
        <authorList>
            <consortium name="The MGC Project Team"/>
        </authorList>
    </citation>
    <scope>NUCLEOTIDE SEQUENCE [LARGE SCALE MRNA] (ISOFORM 1)</scope>
    <source>
        <tissue>Placenta</tissue>
    </source>
</reference>
<reference key="7">
    <citation type="journal article" date="2003" name="Gene">
        <title>The human gene CXorf17 encodes a member of a novel family of putative transmembrane proteins: cDNA cloning and characterization of CXorf17 and its mouse ortholog orf34.</title>
        <authorList>
            <person name="Holden S."/>
            <person name="Raymond F.L."/>
        </authorList>
    </citation>
    <scope>NUCLEOTIDE SEQUENCE [MRNA] OF 705-910 (ISOFORM 2)</scope>
    <scope>TISSUE SPECIFICITY</scope>
</reference>
<reference key="8">
    <citation type="journal article" date="2011" name="BMC Syst. Biol.">
        <title>Initial characterization of the human central proteome.</title>
        <authorList>
            <person name="Burkard T.R."/>
            <person name="Planyavsky M."/>
            <person name="Kaupe I."/>
            <person name="Breitwieser F.P."/>
            <person name="Buerckstuemmer T."/>
            <person name="Bennett K.L."/>
            <person name="Superti-Furga G."/>
            <person name="Colinge J."/>
        </authorList>
    </citation>
    <scope>IDENTIFICATION BY MASS SPECTROMETRY [LARGE SCALE ANALYSIS]</scope>
</reference>
<reference key="9">
    <citation type="journal article" date="2014" name="Mol. Cell. Proteomics">
        <title>Immunoaffinity enrichment and mass spectrometry analysis of protein methylation.</title>
        <authorList>
            <person name="Guo A."/>
            <person name="Gu H."/>
            <person name="Zhou J."/>
            <person name="Mulhern D."/>
            <person name="Wang Y."/>
            <person name="Lee K.A."/>
            <person name="Yang V."/>
            <person name="Aguiar M."/>
            <person name="Kornhauser J."/>
            <person name="Jia X."/>
            <person name="Ren J."/>
            <person name="Beausoleil S.A."/>
            <person name="Silva J.C."/>
            <person name="Vemulapalli V."/>
            <person name="Bedford M.T."/>
            <person name="Comb M.J."/>
        </authorList>
    </citation>
    <scope>METHYLATION [LARGE SCALE ANALYSIS] AT ARG-885</scope>
    <scope>IDENTIFICATION BY MASS SPECTROMETRY [LARGE SCALE ANALYSIS]</scope>
    <source>
        <tissue>Colon carcinoma</tissue>
    </source>
</reference>
<organism>
    <name type="scientific">Homo sapiens</name>
    <name type="common">Human</name>
    <dbReference type="NCBI Taxonomy" id="9606"/>
    <lineage>
        <taxon>Eukaryota</taxon>
        <taxon>Metazoa</taxon>
        <taxon>Chordata</taxon>
        <taxon>Craniata</taxon>
        <taxon>Vertebrata</taxon>
        <taxon>Euteleostomi</taxon>
        <taxon>Mammalia</taxon>
        <taxon>Eutheria</taxon>
        <taxon>Euarchontoglires</taxon>
        <taxon>Primates</taxon>
        <taxon>Haplorrhini</taxon>
        <taxon>Catarrhini</taxon>
        <taxon>Hominidae</taxon>
        <taxon>Homo</taxon>
    </lineage>
</organism>
<dbReference type="EMBL" id="DQ873695">
    <property type="protein sequence ID" value="ABH09086.1"/>
    <property type="molecule type" value="mRNA"/>
</dbReference>
<dbReference type="EMBL" id="AB058741">
    <property type="protein sequence ID" value="BAB47467.1"/>
    <property type="status" value="ALT_INIT"/>
    <property type="molecule type" value="mRNA"/>
</dbReference>
<dbReference type="EMBL" id="AK296825">
    <property type="protein sequence ID" value="BAG59396.1"/>
    <property type="molecule type" value="mRNA"/>
</dbReference>
<dbReference type="EMBL" id="AL008628">
    <property type="status" value="NOT_ANNOTATED_CDS"/>
    <property type="molecule type" value="Genomic_DNA"/>
</dbReference>
<dbReference type="EMBL" id="AL078605">
    <property type="status" value="NOT_ANNOTATED_CDS"/>
    <property type="molecule type" value="Genomic_DNA"/>
</dbReference>
<dbReference type="EMBL" id="CH471051">
    <property type="protein sequence ID" value="EAW47424.1"/>
    <property type="molecule type" value="Genomic_DNA"/>
</dbReference>
<dbReference type="EMBL" id="BC012177">
    <property type="protein sequence ID" value="AAH12177.1"/>
    <property type="molecule type" value="mRNA"/>
</dbReference>
<dbReference type="EMBL" id="AY266458">
    <property type="protein sequence ID" value="AAP31032.1"/>
    <property type="molecule type" value="mRNA"/>
</dbReference>
<dbReference type="CCDS" id="CCDS5314.1">
    <molecule id="Q96EK7-1"/>
</dbReference>
<dbReference type="CCDS" id="CCDS69243.1">
    <molecule id="Q96EK7-3"/>
</dbReference>
<dbReference type="RefSeq" id="NP_001273310.1">
    <molecule id="Q96EK7-3"/>
    <property type="nucleotide sequence ID" value="NM_001286381.2"/>
</dbReference>
<dbReference type="RefSeq" id="NP_115824.1">
    <molecule id="Q96EK7-1"/>
    <property type="nucleotide sequence ID" value="NM_032448.3"/>
</dbReference>
<dbReference type="BioGRID" id="124101">
    <property type="interactions" value="42"/>
</dbReference>
<dbReference type="FunCoup" id="Q96EK7">
    <property type="interactions" value="3152"/>
</dbReference>
<dbReference type="IntAct" id="Q96EK7">
    <property type="interactions" value="30"/>
</dbReference>
<dbReference type="STRING" id="9606.ENSP00000440125"/>
<dbReference type="iPTMnet" id="Q96EK7"/>
<dbReference type="MetOSite" id="Q96EK7"/>
<dbReference type="PhosphoSitePlus" id="Q96EK7"/>
<dbReference type="SwissPalm" id="Q96EK7"/>
<dbReference type="BioMuta" id="FAM120B"/>
<dbReference type="DMDM" id="74751843"/>
<dbReference type="jPOST" id="Q96EK7"/>
<dbReference type="MassIVE" id="Q96EK7"/>
<dbReference type="PaxDb" id="9606-ENSP00000440125"/>
<dbReference type="PeptideAtlas" id="Q96EK7"/>
<dbReference type="ProteomicsDB" id="4505"/>
<dbReference type="ProteomicsDB" id="76419">
    <molecule id="Q96EK7-1"/>
</dbReference>
<dbReference type="ProteomicsDB" id="76420">
    <molecule id="Q96EK7-2"/>
</dbReference>
<dbReference type="Pumba" id="Q96EK7"/>
<dbReference type="Antibodypedia" id="33580">
    <property type="antibodies" value="89 antibodies from 22 providers"/>
</dbReference>
<dbReference type="DNASU" id="84498"/>
<dbReference type="Ensembl" id="ENST00000476287.4">
    <molecule id="Q96EK7-1"/>
    <property type="protein sequence ID" value="ENSP00000417970.1"/>
    <property type="gene ID" value="ENSG00000112584.14"/>
</dbReference>
<dbReference type="Ensembl" id="ENST00000616072.2">
    <molecule id="Q96EK7-3"/>
    <property type="protein sequence ID" value="ENSP00000482544.2"/>
    <property type="gene ID" value="ENSG00000275333.4"/>
</dbReference>
<dbReference type="Ensembl" id="ENST00000617082.4">
    <molecule id="Q96EK7-1"/>
    <property type="protein sequence ID" value="ENSP00000481344.1"/>
    <property type="gene ID" value="ENSG00000275333.4"/>
</dbReference>
<dbReference type="Ensembl" id="ENST00000625626.1">
    <molecule id="Q96EK7-3"/>
    <property type="protein sequence ID" value="ENSP00000485793.1"/>
    <property type="gene ID" value="ENSG00000112584.14"/>
</dbReference>
<dbReference type="GeneID" id="84498"/>
<dbReference type="KEGG" id="hsa:84498"/>
<dbReference type="MANE-Select" id="ENST00000476287.4">
    <property type="protein sequence ID" value="ENSP00000417970.1"/>
    <property type="RefSeq nucleotide sequence ID" value="NM_032448.3"/>
    <property type="RefSeq protein sequence ID" value="NP_115824.1"/>
</dbReference>
<dbReference type="UCSC" id="uc003qxp.5">
    <molecule id="Q96EK7-1"/>
    <property type="organism name" value="human"/>
</dbReference>
<dbReference type="AGR" id="HGNC:21109"/>
<dbReference type="CTD" id="84498"/>
<dbReference type="DisGeNET" id="84498"/>
<dbReference type="GeneCards" id="FAM120B"/>
<dbReference type="HGNC" id="HGNC:21109">
    <property type="gene designation" value="FAM120B"/>
</dbReference>
<dbReference type="HPA" id="ENSG00000112584">
    <property type="expression patterns" value="Low tissue specificity"/>
</dbReference>
<dbReference type="MIM" id="612266">
    <property type="type" value="gene"/>
</dbReference>
<dbReference type="neXtProt" id="NX_Q96EK7"/>
<dbReference type="OpenTargets" id="ENSG00000112584"/>
<dbReference type="PharmGKB" id="PA134920525"/>
<dbReference type="VEuPathDB" id="HostDB:ENSG00000112584"/>
<dbReference type="eggNOG" id="ENOG502QRMW">
    <property type="taxonomic scope" value="Eukaryota"/>
</dbReference>
<dbReference type="GeneTree" id="ENSGT00530000063168"/>
<dbReference type="HOGENOM" id="CLU_007639_0_0_1"/>
<dbReference type="InParanoid" id="Q96EK7"/>
<dbReference type="OrthoDB" id="25987at2759"/>
<dbReference type="PAN-GO" id="Q96EK7">
    <property type="GO annotations" value="3 GO annotations based on evolutionary models"/>
</dbReference>
<dbReference type="PhylomeDB" id="Q96EK7"/>
<dbReference type="TreeFam" id="TF331093"/>
<dbReference type="PathwayCommons" id="Q96EK7"/>
<dbReference type="Reactome" id="R-HSA-1989781">
    <property type="pathway name" value="PPARA activates gene expression"/>
</dbReference>
<dbReference type="Reactome" id="R-HSA-381340">
    <property type="pathway name" value="Transcriptional regulation of white adipocyte differentiation"/>
</dbReference>
<dbReference type="SignaLink" id="Q96EK7"/>
<dbReference type="BioGRID-ORCS" id="84498">
    <property type="hits" value="15 hits in 1163 CRISPR screens"/>
</dbReference>
<dbReference type="ChiTaRS" id="FAM120B">
    <property type="organism name" value="human"/>
</dbReference>
<dbReference type="GenomeRNAi" id="84498"/>
<dbReference type="Pharos" id="Q96EK7">
    <property type="development level" value="Tbio"/>
</dbReference>
<dbReference type="PRO" id="PR:Q96EK7"/>
<dbReference type="Proteomes" id="UP000005640">
    <property type="component" value="Chromosome 6"/>
</dbReference>
<dbReference type="RNAct" id="Q96EK7">
    <property type="molecule type" value="protein"/>
</dbReference>
<dbReference type="Bgee" id="ENSG00000112584">
    <property type="expression patterns" value="Expressed in right uterine tube and 96 other cell types or tissues"/>
</dbReference>
<dbReference type="ExpressionAtlas" id="Q96EK7">
    <property type="expression patterns" value="baseline and differential"/>
</dbReference>
<dbReference type="GO" id="GO:0005634">
    <property type="term" value="C:nucleus"/>
    <property type="evidence" value="ECO:0000318"/>
    <property type="project" value="GO_Central"/>
</dbReference>
<dbReference type="GO" id="GO:0045444">
    <property type="term" value="P:fat cell differentiation"/>
    <property type="evidence" value="ECO:0000318"/>
    <property type="project" value="GO_Central"/>
</dbReference>
<dbReference type="GO" id="GO:0035357">
    <property type="term" value="P:peroxisome proliferator activated receptor signaling pathway"/>
    <property type="evidence" value="ECO:0000318"/>
    <property type="project" value="GO_Central"/>
</dbReference>
<dbReference type="CDD" id="cd18672">
    <property type="entry name" value="PIN_FAM120B-like"/>
    <property type="match status" value="1"/>
</dbReference>
<dbReference type="FunFam" id="3.40.50.1010:FF:000013">
    <property type="entry name" value="Constitutive coactivator of peroxisome proliferator-activated receptor gamma"/>
    <property type="match status" value="1"/>
</dbReference>
<dbReference type="Gene3D" id="3.40.50.1010">
    <property type="entry name" value="5'-nuclease"/>
    <property type="match status" value="1"/>
</dbReference>
<dbReference type="InterPro" id="IPR026784">
    <property type="entry name" value="Coact_PPARg"/>
</dbReference>
<dbReference type="InterPro" id="IPR029060">
    <property type="entry name" value="PIN-like_dom_sf"/>
</dbReference>
<dbReference type="PANTHER" id="PTHR15976">
    <property type="entry name" value="CONSTITUTIVE COACTIVATOR OF PEROXISOME PROLIFERATOR-ACTIVATED RECEPTOR GAMMA"/>
    <property type="match status" value="1"/>
</dbReference>
<dbReference type="PANTHER" id="PTHR15976:SF17">
    <property type="entry name" value="CONSTITUTIVE COACTIVATOR OF PEROXISOME PROLIFERATOR-ACTIVATED RECEPTOR GAMMA"/>
    <property type="match status" value="1"/>
</dbReference>
<dbReference type="SUPFAM" id="SSF88723">
    <property type="entry name" value="PIN domain-like"/>
    <property type="match status" value="1"/>
</dbReference>
<protein>
    <recommendedName>
        <fullName>Constitutive coactivator of peroxisome proliferator-activated receptor gamma</fullName>
        <shortName>Constitutive coactivator of PPAR-gamma</shortName>
        <shortName>Constitutive coactivator of PPARG</shortName>
    </recommendedName>
    <alternativeName>
        <fullName>PPARG constitutive coactivator 1</fullName>
        <shortName>PGCC1</shortName>
    </alternativeName>
    <alternativeName>
        <fullName>Protein FAM120B</fullName>
    </alternativeName>
</protein>
<sequence length="910" mass="103783">MGVRGLQGFVGSTCPHICTVVNFKELAEHHRSKYPGCTPTIVVDAMCCLRYWYTPESWICGGQWREYFSALRDFVKTFTAAGIKLIFFFDGMVEQDKRDEWVKRRLKNNREISRIFHYIKSHKEQPGRNMFFIPSGLAVFTRFALKTLGQETLCSLQEADYEVASYGLQHNCLGILGEDTDYLIYDTCPYFSISELCLESLDTVMLCREKLCESLGLCVADLPLLACLLGNDIIPEGMFESFRYKCLSSYTSVKENFDKKGNIILAVSDHISKVLYLYQGEKKLEEILPLGPNKALFYKGMASYLLPGQKSPWFFQKPKGVITLDKQVISTSSDAESREEVPMCSDAESRQEVPMCTGPESRREVPVYTDSEPRQEVPMCSDPEPRQEVPTCTGPESRREVPMCSDPEPRQEVPMCTGPEARQEVPMYTDSEPRQEVPMYTDSEPRQEVPMYTGSEPRQEVPMYTGPESRQEVPMYTGPESRQEVLIRTDPESRQEIMCTGHESKQEVPICTDPISKQEDSMCTHAEINQKLPVATDFEFKLEALMCTNPEIKQEDPTNVGPEVKQQVTMVSDTEILKVARTHHVQAESYLVYNIMSSGEIECSNTLEDELDQALPSQAFIYRPIRQRVYSLLLEDCQDVTSTCLAVKEWFVYPGNPLRHPDLVRPLQMTIPGGTPSLKILWLNQEPEIQVRRLDTLLACFNLSSSREELQAVESPFQALCCLLIYLFVQVDTLCLEDLHAFIAQALCLQGKSTSQLVNLQPDYINPRAVQLGSLLVRGLTTLVLVNSACGFPWKTSDFMPWNVFDGKLFHQKYLQSEKGYAVEVLLEQNRSRLTKFHNLKAVVCKACMKENRRITGRAHWGSHHAGRWGRQGSSYHRTGSGYSRSSQGQPWRDQGPGSRQYEHDQWRRY</sequence>
<gene>
    <name type="primary">FAM120B</name>
    <name type="synonym">CCPG</name>
    <name type="synonym">KIAA1838</name>
</gene>
<accession>Q96EK7</accession>
<accession>B4DL34</accession>
<accession>Q86V68</accession>
<accession>Q96JI9</accession>
<proteinExistence type="evidence at protein level"/>
<keyword id="KW-0010">Activator</keyword>
<keyword id="KW-0025">Alternative splicing</keyword>
<keyword id="KW-0221">Differentiation</keyword>
<keyword id="KW-0488">Methylation</keyword>
<keyword id="KW-0539">Nucleus</keyword>
<keyword id="KW-1267">Proteomics identification</keyword>
<keyword id="KW-1185">Reference proteome</keyword>
<keyword id="KW-0804">Transcription</keyword>
<keyword id="KW-0805">Transcription regulation</keyword>
<feature type="chain" id="PRO_0000332990" description="Constitutive coactivator of peroxisome proliferator-activated receptor gamma">
    <location>
        <begin position="1"/>
        <end position="910"/>
    </location>
</feature>
<feature type="region of interest" description="Disordered" evidence="2">
    <location>
        <begin position="333"/>
        <end position="416"/>
    </location>
</feature>
<feature type="region of interest" description="Disordered" evidence="2">
    <location>
        <begin position="443"/>
        <end position="483"/>
    </location>
</feature>
<feature type="region of interest" description="Disordered" evidence="2">
    <location>
        <begin position="863"/>
        <end position="910"/>
    </location>
</feature>
<feature type="compositionally biased region" description="Basic and acidic residues" evidence="2">
    <location>
        <begin position="335"/>
        <end position="351"/>
    </location>
</feature>
<feature type="compositionally biased region" description="Basic and acidic residues" evidence="2">
    <location>
        <begin position="360"/>
        <end position="375"/>
    </location>
</feature>
<feature type="compositionally biased region" description="Basic and acidic residues" evidence="2">
    <location>
        <begin position="396"/>
        <end position="411"/>
    </location>
</feature>
<feature type="compositionally biased region" description="Polar residues" evidence="2">
    <location>
        <begin position="872"/>
        <end position="890"/>
    </location>
</feature>
<feature type="compositionally biased region" description="Basic and acidic residues" evidence="2">
    <location>
        <begin position="901"/>
        <end position="910"/>
    </location>
</feature>
<feature type="modified residue" description="Omega-N-methylarginine" evidence="7">
    <location>
        <position position="885"/>
    </location>
</feature>
<feature type="splice variant" id="VSP_055267" description="In isoform 3." evidence="5">
    <location>
        <begin position="1"/>
        <end position="668"/>
    </location>
</feature>
<feature type="splice variant" id="VSP_033415" description="In isoform 2." evidence="4">
    <original>PDY</original>
    <variation>VQT</variation>
    <location>
        <begin position="762"/>
        <end position="764"/>
    </location>
</feature>
<feature type="splice variant" id="VSP_033416" description="In isoform 2." evidence="4">
    <location>
        <begin position="765"/>
        <end position="910"/>
    </location>
</feature>
<feature type="sequence variant" id="VAR_043021" description="In dbSNP:rs6917485.">
    <original>D</original>
    <variation>Y</variation>
    <location>
        <position position="370"/>
    </location>
</feature>
<feature type="sequence variant" id="VAR_043022" description="In dbSNP:rs6905356.">
    <original>M</original>
    <variation>T</variation>
    <location>
        <position position="379"/>
    </location>
</feature>
<feature type="sequence variant" id="VAR_043023" description="In dbSNP:rs6900199.">
    <original>Y</original>
    <variation>C</variation>
    <location>
        <position position="428"/>
    </location>
</feature>
<feature type="sequence variant" id="VAR_043024" description="In dbSNP:rs6900202.">
    <original>D</original>
    <variation>G</variation>
    <location>
        <position position="430"/>
    </location>
</feature>
<feature type="sequence variant" id="VAR_043025" description="In dbSNP:rs6905610.">
    <original>S</original>
    <variation>P</variation>
    <location>
        <position position="431"/>
    </location>
</feature>
<feature type="sequence variant" id="VAR_043026" description="In dbSNP:rs6934830.">
    <original>P</original>
    <variation>A</variation>
    <location>
        <position position="433"/>
    </location>
</feature>
<feature type="sequence variant" id="VAR_043027" description="In dbSNP:rs9366138.">
    <original>Y</original>
    <variation>C</variation>
    <location>
        <position position="440"/>
    </location>
</feature>
<feature type="sequence variant" id="VAR_043028" description="In dbSNP:rs9348266.">
    <original>C</original>
    <variation>G</variation>
    <location>
        <position position="511"/>
    </location>
</feature>
<comment type="function">
    <text evidence="1">Functions as a transactivator of PPARG and ESR1. Functions in adipogenesis through PPARG activation (By similarity).</text>
</comment>
<comment type="subunit">
    <text evidence="1">Interacts with ESR1 and RXRA. Interacts with PPARG; in a ligand-independent manner (By similarity).</text>
</comment>
<comment type="interaction">
    <interactant intactId="EBI-739883">
        <id>Q96EK7</id>
    </interactant>
    <interactant intactId="EBI-355744">
        <id>Q12933</id>
        <label>TRAF2</label>
    </interactant>
    <organismsDiffer>false</organismsDiffer>
    <experiments>4</experiments>
</comment>
<comment type="subcellular location">
    <subcellularLocation>
        <location evidence="1">Nucleus</location>
    </subcellularLocation>
</comment>
<comment type="alternative products">
    <event type="alternative splicing"/>
    <isoform>
        <id>Q96EK7-1</id>
        <name>1</name>
        <sequence type="displayed"/>
    </isoform>
    <isoform>
        <id>Q96EK7-2</id>
        <name>2</name>
        <sequence type="described" ref="VSP_033415 VSP_033416"/>
    </isoform>
    <isoform>
        <id>Q96EK7-3</id>
        <name>3</name>
        <sequence type="described" ref="VSP_055267"/>
    </isoform>
</comment>
<comment type="tissue specificity">
    <text evidence="3">Widely expressed.</text>
</comment>
<comment type="similarity">
    <text evidence="6">Belongs to the constitutive coactivator of PPAR-gamma family.</text>
</comment>
<comment type="sequence caution" evidence="6">
    <conflict type="erroneous initiation">
        <sequence resource="EMBL-CDS" id="BAB47467"/>
    </conflict>
</comment>
<evidence type="ECO:0000250" key="1"/>
<evidence type="ECO:0000256" key="2">
    <source>
        <dbReference type="SAM" id="MobiDB-lite"/>
    </source>
</evidence>
<evidence type="ECO:0000269" key="3">
    <source>
    </source>
</evidence>
<evidence type="ECO:0000303" key="4">
    <source>
    </source>
</evidence>
<evidence type="ECO:0000303" key="5">
    <source>
    </source>
</evidence>
<evidence type="ECO:0000305" key="6"/>
<evidence type="ECO:0007744" key="7">
    <source>
    </source>
</evidence>